<evidence type="ECO:0000255" key="1">
    <source>
        <dbReference type="HAMAP-Rule" id="MF_01197"/>
    </source>
</evidence>
<evidence type="ECO:0000256" key="2">
    <source>
        <dbReference type="SAM" id="MobiDB-lite"/>
    </source>
</evidence>
<organism>
    <name type="scientific">Leuconostoc mesenteroides subsp. mesenteroides (strain ATCC 8293 / DSM 20343 / BCRC 11652 / CCM 1803 / JCM 6124 / NCDO 523 / NBRC 100496 / NCIMB 8023 / NCTC 12954 / NRRL B-1118 / 37Y)</name>
    <dbReference type="NCBI Taxonomy" id="203120"/>
    <lineage>
        <taxon>Bacteria</taxon>
        <taxon>Bacillati</taxon>
        <taxon>Bacillota</taxon>
        <taxon>Bacilli</taxon>
        <taxon>Lactobacillales</taxon>
        <taxon>Lactobacillaceae</taxon>
        <taxon>Leuconostoc</taxon>
    </lineage>
</organism>
<sequence length="149" mass="16612">MALGDTIKRLFSNEEDDYYEEDGYEQSQQQEQQTTQQTSSQPRFVRQTTQSQTPAGLNSANSKIALFEPKVYSDSRSIASQILGGEAAIVNFTQIDEAQAKRILDFLGGTIYAVNGEIERIGQSIFLVTPNTFEISGTLTDNLEPNSRY</sequence>
<keyword id="KW-0131">Cell cycle</keyword>
<keyword id="KW-0132">Cell division</keyword>
<keyword id="KW-0963">Cytoplasm</keyword>
<keyword id="KW-1185">Reference proteome</keyword>
<keyword id="KW-0717">Septation</keyword>
<accession>Q03W39</accession>
<gene>
    <name evidence="1" type="primary">sepF</name>
    <name type="ordered locus">LEUM_1491</name>
</gene>
<feature type="chain" id="PRO_0000334031" description="Cell division protein SepF">
    <location>
        <begin position="1"/>
        <end position="149"/>
    </location>
</feature>
<feature type="region of interest" description="Disordered" evidence="2">
    <location>
        <begin position="12"/>
        <end position="57"/>
    </location>
</feature>
<feature type="compositionally biased region" description="Acidic residues" evidence="2">
    <location>
        <begin position="13"/>
        <end position="24"/>
    </location>
</feature>
<feature type="compositionally biased region" description="Low complexity" evidence="2">
    <location>
        <begin position="25"/>
        <end position="41"/>
    </location>
</feature>
<feature type="compositionally biased region" description="Polar residues" evidence="2">
    <location>
        <begin position="46"/>
        <end position="57"/>
    </location>
</feature>
<dbReference type="EMBL" id="CP000414">
    <property type="protein sequence ID" value="ABJ62583.1"/>
    <property type="molecule type" value="Genomic_DNA"/>
</dbReference>
<dbReference type="RefSeq" id="WP_002815191.1">
    <property type="nucleotide sequence ID" value="NC_008531.1"/>
</dbReference>
<dbReference type="SMR" id="Q03W39"/>
<dbReference type="EnsemblBacteria" id="ABJ62583">
    <property type="protein sequence ID" value="ABJ62583"/>
    <property type="gene ID" value="LEUM_1491"/>
</dbReference>
<dbReference type="GeneID" id="29576649"/>
<dbReference type="KEGG" id="lme:LEUM_1491"/>
<dbReference type="eggNOG" id="COG1799">
    <property type="taxonomic scope" value="Bacteria"/>
</dbReference>
<dbReference type="HOGENOM" id="CLU_078499_4_1_9"/>
<dbReference type="Proteomes" id="UP000000362">
    <property type="component" value="Chromosome"/>
</dbReference>
<dbReference type="GO" id="GO:0005737">
    <property type="term" value="C:cytoplasm"/>
    <property type="evidence" value="ECO:0007669"/>
    <property type="project" value="UniProtKB-SubCell"/>
</dbReference>
<dbReference type="GO" id="GO:0000917">
    <property type="term" value="P:division septum assembly"/>
    <property type="evidence" value="ECO:0007669"/>
    <property type="project" value="UniProtKB-KW"/>
</dbReference>
<dbReference type="GO" id="GO:0043093">
    <property type="term" value="P:FtsZ-dependent cytokinesis"/>
    <property type="evidence" value="ECO:0007669"/>
    <property type="project" value="UniProtKB-UniRule"/>
</dbReference>
<dbReference type="Gene3D" id="3.30.110.150">
    <property type="entry name" value="SepF-like protein"/>
    <property type="match status" value="1"/>
</dbReference>
<dbReference type="HAMAP" id="MF_01197">
    <property type="entry name" value="SepF"/>
    <property type="match status" value="1"/>
</dbReference>
<dbReference type="InterPro" id="IPR023052">
    <property type="entry name" value="Cell_div_SepF"/>
</dbReference>
<dbReference type="InterPro" id="IPR007561">
    <property type="entry name" value="Cell_div_SepF/SepF-rel"/>
</dbReference>
<dbReference type="InterPro" id="IPR038594">
    <property type="entry name" value="SepF-like_sf"/>
</dbReference>
<dbReference type="PANTHER" id="PTHR35798">
    <property type="entry name" value="CELL DIVISION PROTEIN SEPF"/>
    <property type="match status" value="1"/>
</dbReference>
<dbReference type="PANTHER" id="PTHR35798:SF1">
    <property type="entry name" value="CELL DIVISION PROTEIN SEPF"/>
    <property type="match status" value="1"/>
</dbReference>
<dbReference type="Pfam" id="PF04472">
    <property type="entry name" value="SepF"/>
    <property type="match status" value="1"/>
</dbReference>
<proteinExistence type="inferred from homology"/>
<name>SEPF_LEUMM</name>
<protein>
    <recommendedName>
        <fullName evidence="1">Cell division protein SepF</fullName>
    </recommendedName>
</protein>
<comment type="function">
    <text evidence="1">Cell division protein that is part of the divisome complex and is recruited early to the Z-ring. Probably stimulates Z-ring formation, perhaps through the cross-linking of FtsZ protofilaments. Its function overlaps with FtsA.</text>
</comment>
<comment type="subunit">
    <text evidence="1">Homodimer. Interacts with FtsZ.</text>
</comment>
<comment type="subcellular location">
    <subcellularLocation>
        <location evidence="1">Cytoplasm</location>
    </subcellularLocation>
    <text evidence="1">Localizes to the division site, in a FtsZ-dependent manner.</text>
</comment>
<comment type="similarity">
    <text evidence="1">Belongs to the SepF family.</text>
</comment>
<reference key="1">
    <citation type="journal article" date="2006" name="Proc. Natl. Acad. Sci. U.S.A.">
        <title>Comparative genomics of the lactic acid bacteria.</title>
        <authorList>
            <person name="Makarova K.S."/>
            <person name="Slesarev A."/>
            <person name="Wolf Y.I."/>
            <person name="Sorokin A."/>
            <person name="Mirkin B."/>
            <person name="Koonin E.V."/>
            <person name="Pavlov A."/>
            <person name="Pavlova N."/>
            <person name="Karamychev V."/>
            <person name="Polouchine N."/>
            <person name="Shakhova V."/>
            <person name="Grigoriev I."/>
            <person name="Lou Y."/>
            <person name="Rohksar D."/>
            <person name="Lucas S."/>
            <person name="Huang K."/>
            <person name="Goodstein D.M."/>
            <person name="Hawkins T."/>
            <person name="Plengvidhya V."/>
            <person name="Welker D."/>
            <person name="Hughes J."/>
            <person name="Goh Y."/>
            <person name="Benson A."/>
            <person name="Baldwin K."/>
            <person name="Lee J.-H."/>
            <person name="Diaz-Muniz I."/>
            <person name="Dosti B."/>
            <person name="Smeianov V."/>
            <person name="Wechter W."/>
            <person name="Barabote R."/>
            <person name="Lorca G."/>
            <person name="Altermann E."/>
            <person name="Barrangou R."/>
            <person name="Ganesan B."/>
            <person name="Xie Y."/>
            <person name="Rawsthorne H."/>
            <person name="Tamir D."/>
            <person name="Parker C."/>
            <person name="Breidt F."/>
            <person name="Broadbent J.R."/>
            <person name="Hutkins R."/>
            <person name="O'Sullivan D."/>
            <person name="Steele J."/>
            <person name="Unlu G."/>
            <person name="Saier M.H. Jr."/>
            <person name="Klaenhammer T."/>
            <person name="Richardson P."/>
            <person name="Kozyavkin S."/>
            <person name="Weimer B.C."/>
            <person name="Mills D.A."/>
        </authorList>
    </citation>
    <scope>NUCLEOTIDE SEQUENCE [LARGE SCALE GENOMIC DNA]</scope>
    <source>
        <strain>ATCC 8293 / DSM 20343 / BCRC 11652 / CCM 1803 / JCM 6124 / NCDO 523 / NBRC 100496 / NCIMB 8023 / NCTC 12954 / NRRL B-1118 / 37Y</strain>
    </source>
</reference>